<dbReference type="EMBL" id="BC082297">
    <property type="protein sequence ID" value="AAH82297.1"/>
    <property type="molecule type" value="mRNA"/>
</dbReference>
<dbReference type="RefSeq" id="NP_001005601.1">
    <property type="nucleotide sequence ID" value="NM_001005601.2"/>
</dbReference>
<dbReference type="FunCoup" id="Q641M3">
    <property type="interactions" value="713"/>
</dbReference>
<dbReference type="STRING" id="7955.ENSDARP00000053309"/>
<dbReference type="PaxDb" id="7955-ENSDARP00000053309"/>
<dbReference type="Ensembl" id="ENSDART00000053310">
    <property type="protein sequence ID" value="ENSDARP00000053309"/>
    <property type="gene ID" value="ENSDARG00000036704"/>
</dbReference>
<dbReference type="GeneID" id="449559"/>
<dbReference type="KEGG" id="dre:449559"/>
<dbReference type="AGR" id="ZFIN:ZDB-GENE-040927-26"/>
<dbReference type="CTD" id="129787"/>
<dbReference type="ZFIN" id="ZDB-GENE-040927-26">
    <property type="gene designation" value="tmem18"/>
</dbReference>
<dbReference type="eggNOG" id="ENOG502RZ4T">
    <property type="taxonomic scope" value="Eukaryota"/>
</dbReference>
<dbReference type="HOGENOM" id="CLU_101161_1_1_1"/>
<dbReference type="InParanoid" id="Q641M3"/>
<dbReference type="OMA" id="TFSKQQY"/>
<dbReference type="OrthoDB" id="411535at2759"/>
<dbReference type="PhylomeDB" id="Q641M3"/>
<dbReference type="TreeFam" id="TF324883"/>
<dbReference type="PRO" id="PR:Q641M3"/>
<dbReference type="Proteomes" id="UP000000437">
    <property type="component" value="Chromosome 23"/>
</dbReference>
<dbReference type="Bgee" id="ENSDARG00000036704">
    <property type="expression patterns" value="Expressed in pharyngeal gill and 27 other cell types or tissues"/>
</dbReference>
<dbReference type="GO" id="GO:0031965">
    <property type="term" value="C:nuclear membrane"/>
    <property type="evidence" value="ECO:0000250"/>
    <property type="project" value="UniProtKB"/>
</dbReference>
<dbReference type="GO" id="GO:0003677">
    <property type="term" value="F:DNA binding"/>
    <property type="evidence" value="ECO:0007669"/>
    <property type="project" value="UniProtKB-KW"/>
</dbReference>
<dbReference type="GO" id="GO:0045444">
    <property type="term" value="P:fat cell differentiation"/>
    <property type="evidence" value="ECO:0000315"/>
    <property type="project" value="ZFIN"/>
</dbReference>
<dbReference type="InterPro" id="IPR026721">
    <property type="entry name" value="TMEM18"/>
</dbReference>
<dbReference type="PANTHER" id="PTHR22593">
    <property type="entry name" value="TRANSMEMBRANE PROTEIN 18"/>
    <property type="match status" value="1"/>
</dbReference>
<dbReference type="PANTHER" id="PTHR22593:SF2">
    <property type="entry name" value="TRANSMEMBRANE PROTEIN 18"/>
    <property type="match status" value="1"/>
</dbReference>
<dbReference type="Pfam" id="PF14770">
    <property type="entry name" value="TMEM18"/>
    <property type="match status" value="1"/>
</dbReference>
<feature type="chain" id="PRO_0000284373" description="Transmembrane protein 18">
    <location>
        <begin position="1"/>
        <end position="152"/>
    </location>
</feature>
<feature type="topological domain" description="Perinuclear space" evidence="3">
    <location>
        <begin position="1"/>
        <end position="36"/>
    </location>
</feature>
<feature type="transmembrane region" description="Helical" evidence="3">
    <location>
        <begin position="37"/>
        <end position="57"/>
    </location>
</feature>
<feature type="topological domain" description="Nuclear" evidence="3">
    <location>
        <begin position="58"/>
        <end position="63"/>
    </location>
</feature>
<feature type="transmembrane region" description="Helical" evidence="3">
    <location>
        <begin position="64"/>
        <end position="84"/>
    </location>
</feature>
<feature type="topological domain" description="Perinuclear space" evidence="3">
    <location>
        <begin position="85"/>
        <end position="102"/>
    </location>
</feature>
<feature type="transmembrane region" description="Helical" evidence="3">
    <location>
        <begin position="103"/>
        <end position="123"/>
    </location>
</feature>
<feature type="topological domain" description="Nuclear" evidence="3">
    <location>
        <begin position="124"/>
        <end position="152"/>
    </location>
</feature>
<feature type="region of interest" description="DNA-binding" evidence="1">
    <location>
        <begin position="124"/>
        <end position="152"/>
    </location>
</feature>
<feature type="coiled-coil region" evidence="3">
    <location>
        <begin position="129"/>
        <end position="152"/>
    </location>
</feature>
<accession>Q641M3</accession>
<gene>
    <name type="primary">tmem18</name>
    <name type="ORF">zgc:101011</name>
</gene>
<keyword id="KW-0175">Coiled coil</keyword>
<keyword id="KW-0238">DNA-binding</keyword>
<keyword id="KW-0472">Membrane</keyword>
<keyword id="KW-0539">Nucleus</keyword>
<keyword id="KW-1185">Reference proteome</keyword>
<keyword id="KW-0812">Transmembrane</keyword>
<keyword id="KW-1133">Transmembrane helix</keyword>
<reference key="1">
    <citation type="submission" date="2004-09" db="EMBL/GenBank/DDBJ databases">
        <authorList>
            <consortium name="NIH - Zebrafish Gene Collection (ZGC) project"/>
        </authorList>
    </citation>
    <scope>NUCLEOTIDE SEQUENCE [LARGE SCALE MRNA]</scope>
    <source>
        <tissue>Embryo</tissue>
    </source>
</reference>
<name>TMM18_DANRE</name>
<protein>
    <recommendedName>
        <fullName>Transmembrane protein 18</fullName>
    </recommendedName>
</protein>
<evidence type="ECO:0000250" key="1"/>
<evidence type="ECO:0000250" key="2">
    <source>
        <dbReference type="UniProtKB" id="Q96B42"/>
    </source>
</evidence>
<evidence type="ECO:0000255" key="3"/>
<evidence type="ECO:0000305" key="4"/>
<comment type="subcellular location">
    <subcellularLocation>
        <location evidence="2">Nucleus membrane</location>
        <topology evidence="3">Multi-pass membrane protein</topology>
    </subcellularLocation>
</comment>
<comment type="similarity">
    <text evidence="4">Belongs to the TMEM18 family.</text>
</comment>
<organism>
    <name type="scientific">Danio rerio</name>
    <name type="common">Zebrafish</name>
    <name type="synonym">Brachydanio rerio</name>
    <dbReference type="NCBI Taxonomy" id="7955"/>
    <lineage>
        <taxon>Eukaryota</taxon>
        <taxon>Metazoa</taxon>
        <taxon>Chordata</taxon>
        <taxon>Craniata</taxon>
        <taxon>Vertebrata</taxon>
        <taxon>Euteleostomi</taxon>
        <taxon>Actinopterygii</taxon>
        <taxon>Neopterygii</taxon>
        <taxon>Teleostei</taxon>
        <taxon>Ostariophysi</taxon>
        <taxon>Cypriniformes</taxon>
        <taxon>Danionidae</taxon>
        <taxon>Danioninae</taxon>
        <taxon>Danio</taxon>
    </lineage>
</organism>
<sequence length="152" mass="17817">MTASNTKNASAIPIDKFSNVRITSIWTFLQSVDWSEPWLMALLAFHVFCFAFTLLSCKYYRIQICHFLLMVAMVYSAEYLNELAAMNWRSFSKFQYFDSKGMFISLVYSVPLLLNTVIIVAVWVWRTFSTMTELKILQLKRKAARENHKKTQ</sequence>
<proteinExistence type="evidence at transcript level"/>